<proteinExistence type="inferred from homology"/>
<name>TTCA_SALG2</name>
<evidence type="ECO:0000255" key="1">
    <source>
        <dbReference type="HAMAP-Rule" id="MF_01850"/>
    </source>
</evidence>
<reference key="1">
    <citation type="journal article" date="2008" name="Genome Res.">
        <title>Comparative genome analysis of Salmonella enteritidis PT4 and Salmonella gallinarum 287/91 provides insights into evolutionary and host adaptation pathways.</title>
        <authorList>
            <person name="Thomson N.R."/>
            <person name="Clayton D.J."/>
            <person name="Windhorst D."/>
            <person name="Vernikos G."/>
            <person name="Davidson S."/>
            <person name="Churcher C."/>
            <person name="Quail M.A."/>
            <person name="Stevens M."/>
            <person name="Jones M.A."/>
            <person name="Watson M."/>
            <person name="Barron A."/>
            <person name="Layton A."/>
            <person name="Pickard D."/>
            <person name="Kingsley R.A."/>
            <person name="Bignell A."/>
            <person name="Clark L."/>
            <person name="Harris B."/>
            <person name="Ormond D."/>
            <person name="Abdellah Z."/>
            <person name="Brooks K."/>
            <person name="Cherevach I."/>
            <person name="Chillingworth T."/>
            <person name="Woodward J."/>
            <person name="Norberczak H."/>
            <person name="Lord A."/>
            <person name="Arrowsmith C."/>
            <person name="Jagels K."/>
            <person name="Moule S."/>
            <person name="Mungall K."/>
            <person name="Saunders M."/>
            <person name="Whitehead S."/>
            <person name="Chabalgoity J.A."/>
            <person name="Maskell D."/>
            <person name="Humphreys T."/>
            <person name="Roberts M."/>
            <person name="Barrow P.A."/>
            <person name="Dougan G."/>
            <person name="Parkhill J."/>
        </authorList>
    </citation>
    <scope>NUCLEOTIDE SEQUENCE [LARGE SCALE GENOMIC DNA]</scope>
    <source>
        <strain>287/91 / NCTC 13346</strain>
    </source>
</reference>
<organism>
    <name type="scientific">Salmonella gallinarum (strain 287/91 / NCTC 13346)</name>
    <dbReference type="NCBI Taxonomy" id="550538"/>
    <lineage>
        <taxon>Bacteria</taxon>
        <taxon>Pseudomonadati</taxon>
        <taxon>Pseudomonadota</taxon>
        <taxon>Gammaproteobacteria</taxon>
        <taxon>Enterobacterales</taxon>
        <taxon>Enterobacteriaceae</taxon>
        <taxon>Salmonella</taxon>
    </lineage>
</organism>
<gene>
    <name evidence="1" type="primary">ttcA</name>
    <name type="ordered locus">SG1463</name>
</gene>
<keyword id="KW-0004">4Fe-4S</keyword>
<keyword id="KW-0067">ATP-binding</keyword>
<keyword id="KW-0963">Cytoplasm</keyword>
<keyword id="KW-0408">Iron</keyword>
<keyword id="KW-0411">Iron-sulfur</keyword>
<keyword id="KW-0460">Magnesium</keyword>
<keyword id="KW-0479">Metal-binding</keyword>
<keyword id="KW-0547">Nucleotide-binding</keyword>
<keyword id="KW-0694">RNA-binding</keyword>
<keyword id="KW-0808">Transferase</keyword>
<keyword id="KW-0819">tRNA processing</keyword>
<keyword id="KW-0820">tRNA-binding</keyword>
<feature type="chain" id="PRO_1000188656" description="tRNA-cytidine(32) 2-sulfurtransferase">
    <location>
        <begin position="1"/>
        <end position="311"/>
    </location>
</feature>
<feature type="short sequence motif" description="PP-loop motif" evidence="1">
    <location>
        <begin position="47"/>
        <end position="52"/>
    </location>
</feature>
<feature type="binding site" evidence="1">
    <location>
        <position position="122"/>
    </location>
    <ligand>
        <name>[4Fe-4S] cluster</name>
        <dbReference type="ChEBI" id="CHEBI:49883"/>
    </ligand>
</feature>
<feature type="binding site" evidence="1">
    <location>
        <position position="125"/>
    </location>
    <ligand>
        <name>[4Fe-4S] cluster</name>
        <dbReference type="ChEBI" id="CHEBI:49883"/>
    </ligand>
</feature>
<feature type="binding site" evidence="1">
    <location>
        <position position="213"/>
    </location>
    <ligand>
        <name>[4Fe-4S] cluster</name>
        <dbReference type="ChEBI" id="CHEBI:49883"/>
    </ligand>
</feature>
<accession>B5RA25</accession>
<dbReference type="EC" id="2.8.1.-" evidence="1"/>
<dbReference type="EMBL" id="AM933173">
    <property type="protein sequence ID" value="CAR37331.1"/>
    <property type="molecule type" value="Genomic_DNA"/>
</dbReference>
<dbReference type="RefSeq" id="WP_001156217.1">
    <property type="nucleotide sequence ID" value="NC_011274.1"/>
</dbReference>
<dbReference type="SMR" id="B5RA25"/>
<dbReference type="KEGG" id="seg:SG1463"/>
<dbReference type="HOGENOM" id="CLU_026481_0_0_6"/>
<dbReference type="Proteomes" id="UP000008321">
    <property type="component" value="Chromosome"/>
</dbReference>
<dbReference type="GO" id="GO:0005737">
    <property type="term" value="C:cytoplasm"/>
    <property type="evidence" value="ECO:0007669"/>
    <property type="project" value="UniProtKB-SubCell"/>
</dbReference>
<dbReference type="GO" id="GO:0051539">
    <property type="term" value="F:4 iron, 4 sulfur cluster binding"/>
    <property type="evidence" value="ECO:0007669"/>
    <property type="project" value="UniProtKB-UniRule"/>
</dbReference>
<dbReference type="GO" id="GO:0005524">
    <property type="term" value="F:ATP binding"/>
    <property type="evidence" value="ECO:0007669"/>
    <property type="project" value="UniProtKB-UniRule"/>
</dbReference>
<dbReference type="GO" id="GO:0000287">
    <property type="term" value="F:magnesium ion binding"/>
    <property type="evidence" value="ECO:0007669"/>
    <property type="project" value="UniProtKB-UniRule"/>
</dbReference>
<dbReference type="GO" id="GO:0016783">
    <property type="term" value="F:sulfurtransferase activity"/>
    <property type="evidence" value="ECO:0007669"/>
    <property type="project" value="UniProtKB-UniRule"/>
</dbReference>
<dbReference type="GO" id="GO:0000049">
    <property type="term" value="F:tRNA binding"/>
    <property type="evidence" value="ECO:0007669"/>
    <property type="project" value="UniProtKB-KW"/>
</dbReference>
<dbReference type="GO" id="GO:0034227">
    <property type="term" value="P:tRNA thio-modification"/>
    <property type="evidence" value="ECO:0007669"/>
    <property type="project" value="UniProtKB-UniRule"/>
</dbReference>
<dbReference type="CDD" id="cd24138">
    <property type="entry name" value="TtcA-like"/>
    <property type="match status" value="1"/>
</dbReference>
<dbReference type="FunFam" id="3.40.50.620:FF:000046">
    <property type="entry name" value="tRNA-cytidine(32) 2-sulfurtransferase"/>
    <property type="match status" value="1"/>
</dbReference>
<dbReference type="Gene3D" id="3.40.50.620">
    <property type="entry name" value="HUPs"/>
    <property type="match status" value="1"/>
</dbReference>
<dbReference type="HAMAP" id="MF_01850">
    <property type="entry name" value="TtcA"/>
    <property type="match status" value="1"/>
</dbReference>
<dbReference type="InterPro" id="IPR014729">
    <property type="entry name" value="Rossmann-like_a/b/a_fold"/>
</dbReference>
<dbReference type="InterPro" id="IPR011063">
    <property type="entry name" value="TilS/TtcA_N"/>
</dbReference>
<dbReference type="InterPro" id="IPR012089">
    <property type="entry name" value="tRNA_Cyd_32_2_STrfase"/>
</dbReference>
<dbReference type="InterPro" id="IPR035107">
    <property type="entry name" value="tRNA_thiolation_TtcA_Ctu1"/>
</dbReference>
<dbReference type="NCBIfam" id="NF007972">
    <property type="entry name" value="PRK10696.1"/>
    <property type="match status" value="1"/>
</dbReference>
<dbReference type="PANTHER" id="PTHR43686:SF1">
    <property type="entry name" value="AMINOTRAN_5 DOMAIN-CONTAINING PROTEIN"/>
    <property type="match status" value="1"/>
</dbReference>
<dbReference type="PANTHER" id="PTHR43686">
    <property type="entry name" value="SULFURTRANSFERASE-RELATED"/>
    <property type="match status" value="1"/>
</dbReference>
<dbReference type="Pfam" id="PF01171">
    <property type="entry name" value="ATP_bind_3"/>
    <property type="match status" value="1"/>
</dbReference>
<dbReference type="PIRSF" id="PIRSF004976">
    <property type="entry name" value="ATPase_YdaO"/>
    <property type="match status" value="1"/>
</dbReference>
<dbReference type="SUPFAM" id="SSF52402">
    <property type="entry name" value="Adenine nucleotide alpha hydrolases-like"/>
    <property type="match status" value="1"/>
</dbReference>
<comment type="function">
    <text evidence="1">Catalyzes the ATP-dependent 2-thiolation of cytidine in position 32 of tRNA, to form 2-thiocytidine (s(2)C32). The sulfur atoms are provided by the cysteine/cysteine desulfurase (IscS) system.</text>
</comment>
<comment type="catalytic activity">
    <reaction evidence="1">
        <text>cytidine(32) in tRNA + S-sulfanyl-L-cysteinyl-[cysteine desulfurase] + AH2 + ATP = 2-thiocytidine(32) in tRNA + L-cysteinyl-[cysteine desulfurase] + A + AMP + diphosphate + H(+)</text>
        <dbReference type="Rhea" id="RHEA:57048"/>
        <dbReference type="Rhea" id="RHEA-COMP:10288"/>
        <dbReference type="Rhea" id="RHEA-COMP:12157"/>
        <dbReference type="Rhea" id="RHEA-COMP:12158"/>
        <dbReference type="Rhea" id="RHEA-COMP:14821"/>
        <dbReference type="ChEBI" id="CHEBI:13193"/>
        <dbReference type="ChEBI" id="CHEBI:15378"/>
        <dbReference type="ChEBI" id="CHEBI:17499"/>
        <dbReference type="ChEBI" id="CHEBI:29950"/>
        <dbReference type="ChEBI" id="CHEBI:30616"/>
        <dbReference type="ChEBI" id="CHEBI:33019"/>
        <dbReference type="ChEBI" id="CHEBI:61963"/>
        <dbReference type="ChEBI" id="CHEBI:82748"/>
        <dbReference type="ChEBI" id="CHEBI:141453"/>
        <dbReference type="ChEBI" id="CHEBI:456215"/>
    </reaction>
    <physiologicalReaction direction="left-to-right" evidence="1">
        <dbReference type="Rhea" id="RHEA:57049"/>
    </physiologicalReaction>
</comment>
<comment type="cofactor">
    <cofactor evidence="1">
        <name>Mg(2+)</name>
        <dbReference type="ChEBI" id="CHEBI:18420"/>
    </cofactor>
</comment>
<comment type="cofactor">
    <cofactor evidence="1">
        <name>[4Fe-4S] cluster</name>
        <dbReference type="ChEBI" id="CHEBI:49883"/>
    </cofactor>
    <text evidence="1">Binds 1 [4Fe-4S] cluster per subunit. The cluster is chelated by three Cys residues, the fourth Fe has a free coordination site that may bind a sulfur atom transferred from the persulfide of IscS.</text>
</comment>
<comment type="pathway">
    <text evidence="1">tRNA modification.</text>
</comment>
<comment type="subunit">
    <text evidence="1">Homodimer.</text>
</comment>
<comment type="subcellular location">
    <subcellularLocation>
        <location evidence="1">Cytoplasm</location>
    </subcellularLocation>
</comment>
<comment type="miscellaneous">
    <text evidence="1">The thiolation reaction likely consists of two steps: a first activation step by ATP to form an adenylated intermediate of the target base of tRNA, and a second nucleophilic substitution step of the sulfur (S) atom supplied by the hydrosulfide attached to the Fe-S cluster.</text>
</comment>
<comment type="similarity">
    <text evidence="1">Belongs to the TtcA family.</text>
</comment>
<protein>
    <recommendedName>
        <fullName evidence="1">tRNA-cytidine(32) 2-sulfurtransferase</fullName>
        <ecNumber evidence="1">2.8.1.-</ecNumber>
    </recommendedName>
    <alternativeName>
        <fullName evidence="1">Two-thiocytidine biosynthesis protein A</fullName>
    </alternativeName>
    <alternativeName>
        <fullName evidence="1">tRNA 2-thiocytidine biosynthesis protein TtcA</fullName>
    </alternativeName>
</protein>
<sequence length="311" mass="35344">MQEIQKNTKKEQYNLNKLQKRLRRNVGEAIADFNMIEEGDRIMVCLSGGKDSYTMLEILRNLQQSAPINFSLVAVNLDQKQPGFPEHILPAYLEQLGVEYKIVEENTYGIVKEKIPEGKTTCSLCSRLRRGILYRTATELGATKIALGHHRDDILQTLFLNMFYGGKMKGMPPKLMSDDGKHIVIRPLAYCREKDIVRFAEAKAFPIIPCNLCGSQPNLQRQVIADMLRDWDKRYPGRIETMFSAMQNVVPSHLCDTNLFDFKGITHGSEVVDGGDLAFDREEIPLQPAGWQPEEDDTALEALRLDVIEVK</sequence>